<name>AROQ_ACIB3</name>
<comment type="function">
    <text evidence="1">Catalyzes a trans-dehydration via an enolate intermediate.</text>
</comment>
<comment type="catalytic activity">
    <reaction evidence="1">
        <text>3-dehydroquinate = 3-dehydroshikimate + H2O</text>
        <dbReference type="Rhea" id="RHEA:21096"/>
        <dbReference type="ChEBI" id="CHEBI:15377"/>
        <dbReference type="ChEBI" id="CHEBI:16630"/>
        <dbReference type="ChEBI" id="CHEBI:32364"/>
        <dbReference type="EC" id="4.2.1.10"/>
    </reaction>
</comment>
<comment type="pathway">
    <text evidence="1">Metabolic intermediate biosynthesis; chorismate biosynthesis; chorismate from D-erythrose 4-phosphate and phosphoenolpyruvate: step 3/7.</text>
</comment>
<comment type="subunit">
    <text evidence="1">Homododecamer.</text>
</comment>
<comment type="similarity">
    <text evidence="1">Belongs to the type-II 3-dehydroquinase family.</text>
</comment>
<gene>
    <name evidence="1" type="primary">aroQ</name>
    <name type="ordered locus">ABBFA_001438</name>
</gene>
<proteinExistence type="inferred from homology"/>
<organism>
    <name type="scientific">Acinetobacter baumannii (strain AB307-0294)</name>
    <dbReference type="NCBI Taxonomy" id="557600"/>
    <lineage>
        <taxon>Bacteria</taxon>
        <taxon>Pseudomonadati</taxon>
        <taxon>Pseudomonadota</taxon>
        <taxon>Gammaproteobacteria</taxon>
        <taxon>Moraxellales</taxon>
        <taxon>Moraxellaceae</taxon>
        <taxon>Acinetobacter</taxon>
        <taxon>Acinetobacter calcoaceticus/baumannii complex</taxon>
    </lineage>
</organism>
<accession>B7H1C7</accession>
<sequence>MSSTILVIHGPNLNLLGKREPEVYGHLTLDNINQQLIAQAEQASITLDTFQSNWEGAIVDRIHQAQTEGVKLIIINPAALTHTSVALRDALLGVAIPFIEVHLSNVHAREAFRHHSYLSDKAIGVICGLGAKGYSFALDYAIEKIQPSNPN</sequence>
<dbReference type="EC" id="4.2.1.10" evidence="1"/>
<dbReference type="EMBL" id="CP001172">
    <property type="protein sequence ID" value="ACJ57195.1"/>
    <property type="molecule type" value="Genomic_DNA"/>
</dbReference>
<dbReference type="RefSeq" id="WP_000099412.1">
    <property type="nucleotide sequence ID" value="NZ_CP001172.1"/>
</dbReference>
<dbReference type="SMR" id="B7H1C7"/>
<dbReference type="GeneID" id="92894274"/>
<dbReference type="HOGENOM" id="CLU_090968_1_0_6"/>
<dbReference type="UniPathway" id="UPA00053">
    <property type="reaction ID" value="UER00086"/>
</dbReference>
<dbReference type="Proteomes" id="UP000006924">
    <property type="component" value="Chromosome"/>
</dbReference>
<dbReference type="GO" id="GO:0003855">
    <property type="term" value="F:3-dehydroquinate dehydratase activity"/>
    <property type="evidence" value="ECO:0007669"/>
    <property type="project" value="UniProtKB-UniRule"/>
</dbReference>
<dbReference type="GO" id="GO:0008652">
    <property type="term" value="P:amino acid biosynthetic process"/>
    <property type="evidence" value="ECO:0007669"/>
    <property type="project" value="UniProtKB-KW"/>
</dbReference>
<dbReference type="GO" id="GO:0009073">
    <property type="term" value="P:aromatic amino acid family biosynthetic process"/>
    <property type="evidence" value="ECO:0007669"/>
    <property type="project" value="UniProtKB-KW"/>
</dbReference>
<dbReference type="GO" id="GO:0009423">
    <property type="term" value="P:chorismate biosynthetic process"/>
    <property type="evidence" value="ECO:0007669"/>
    <property type="project" value="UniProtKB-UniRule"/>
</dbReference>
<dbReference type="GO" id="GO:0019631">
    <property type="term" value="P:quinate catabolic process"/>
    <property type="evidence" value="ECO:0007669"/>
    <property type="project" value="TreeGrafter"/>
</dbReference>
<dbReference type="CDD" id="cd00466">
    <property type="entry name" value="DHQase_II"/>
    <property type="match status" value="1"/>
</dbReference>
<dbReference type="Gene3D" id="3.40.50.9100">
    <property type="entry name" value="Dehydroquinase, class II"/>
    <property type="match status" value="1"/>
</dbReference>
<dbReference type="HAMAP" id="MF_00169">
    <property type="entry name" value="AroQ"/>
    <property type="match status" value="1"/>
</dbReference>
<dbReference type="InterPro" id="IPR001874">
    <property type="entry name" value="DHquinase_II"/>
</dbReference>
<dbReference type="InterPro" id="IPR018509">
    <property type="entry name" value="DHquinase_II_CS"/>
</dbReference>
<dbReference type="InterPro" id="IPR036441">
    <property type="entry name" value="DHquinase_II_sf"/>
</dbReference>
<dbReference type="NCBIfam" id="TIGR01088">
    <property type="entry name" value="aroQ"/>
    <property type="match status" value="1"/>
</dbReference>
<dbReference type="NCBIfam" id="NF003804">
    <property type="entry name" value="PRK05395.1-1"/>
    <property type="match status" value="1"/>
</dbReference>
<dbReference type="NCBIfam" id="NF003805">
    <property type="entry name" value="PRK05395.1-2"/>
    <property type="match status" value="1"/>
</dbReference>
<dbReference type="NCBIfam" id="NF003806">
    <property type="entry name" value="PRK05395.1-3"/>
    <property type="match status" value="1"/>
</dbReference>
<dbReference type="NCBIfam" id="NF003807">
    <property type="entry name" value="PRK05395.1-4"/>
    <property type="match status" value="1"/>
</dbReference>
<dbReference type="PANTHER" id="PTHR21272">
    <property type="entry name" value="CATABOLIC 3-DEHYDROQUINASE"/>
    <property type="match status" value="1"/>
</dbReference>
<dbReference type="PANTHER" id="PTHR21272:SF3">
    <property type="entry name" value="CATABOLIC 3-DEHYDROQUINASE"/>
    <property type="match status" value="1"/>
</dbReference>
<dbReference type="Pfam" id="PF01220">
    <property type="entry name" value="DHquinase_II"/>
    <property type="match status" value="1"/>
</dbReference>
<dbReference type="PIRSF" id="PIRSF001399">
    <property type="entry name" value="DHquinase_II"/>
    <property type="match status" value="1"/>
</dbReference>
<dbReference type="SUPFAM" id="SSF52304">
    <property type="entry name" value="Type II 3-dehydroquinate dehydratase"/>
    <property type="match status" value="1"/>
</dbReference>
<dbReference type="PROSITE" id="PS01029">
    <property type="entry name" value="DEHYDROQUINASE_II"/>
    <property type="match status" value="1"/>
</dbReference>
<keyword id="KW-0028">Amino-acid biosynthesis</keyword>
<keyword id="KW-0057">Aromatic amino acid biosynthesis</keyword>
<keyword id="KW-0456">Lyase</keyword>
<evidence type="ECO:0000255" key="1">
    <source>
        <dbReference type="HAMAP-Rule" id="MF_00169"/>
    </source>
</evidence>
<reference key="1">
    <citation type="journal article" date="2008" name="J. Bacteriol.">
        <title>Comparative genome sequence analysis of multidrug-resistant Acinetobacter baumannii.</title>
        <authorList>
            <person name="Adams M.D."/>
            <person name="Goglin K."/>
            <person name="Molyneaux N."/>
            <person name="Hujer K.M."/>
            <person name="Lavender H."/>
            <person name="Jamison J.J."/>
            <person name="MacDonald I.J."/>
            <person name="Martin K.M."/>
            <person name="Russo T."/>
            <person name="Campagnari A.A."/>
            <person name="Hujer A.M."/>
            <person name="Bonomo R.A."/>
            <person name="Gill S.R."/>
        </authorList>
    </citation>
    <scope>NUCLEOTIDE SEQUENCE [LARGE SCALE GENOMIC DNA]</scope>
    <source>
        <strain>AB307-0294</strain>
    </source>
</reference>
<feature type="chain" id="PRO_1000118269" description="3-dehydroquinate dehydratase">
    <location>
        <begin position="1"/>
        <end position="151"/>
    </location>
</feature>
<feature type="active site" description="Proton acceptor" evidence="1">
    <location>
        <position position="24"/>
    </location>
</feature>
<feature type="active site" description="Proton donor" evidence="1">
    <location>
        <position position="102"/>
    </location>
</feature>
<feature type="binding site" evidence="1">
    <location>
        <position position="76"/>
    </location>
    <ligand>
        <name>substrate</name>
    </ligand>
</feature>
<feature type="binding site" evidence="1">
    <location>
        <position position="82"/>
    </location>
    <ligand>
        <name>substrate</name>
    </ligand>
</feature>
<feature type="binding site" evidence="1">
    <location>
        <position position="89"/>
    </location>
    <ligand>
        <name>substrate</name>
    </ligand>
</feature>
<feature type="binding site" evidence="1">
    <location>
        <begin position="103"/>
        <end position="104"/>
    </location>
    <ligand>
        <name>substrate</name>
    </ligand>
</feature>
<feature type="binding site" evidence="1">
    <location>
        <position position="113"/>
    </location>
    <ligand>
        <name>substrate</name>
    </ligand>
</feature>
<feature type="site" description="Transition state stabilizer" evidence="1">
    <location>
        <position position="19"/>
    </location>
</feature>
<protein>
    <recommendedName>
        <fullName evidence="1">3-dehydroquinate dehydratase</fullName>
        <shortName evidence="1">3-dehydroquinase</shortName>
        <ecNumber evidence="1">4.2.1.10</ecNumber>
    </recommendedName>
    <alternativeName>
        <fullName evidence="1">Type II DHQase</fullName>
    </alternativeName>
</protein>